<gene>
    <name evidence="1" type="primary">hutI</name>
    <name type="ordered locus">BCAH820_3660</name>
</gene>
<keyword id="KW-0963">Cytoplasm</keyword>
<keyword id="KW-0369">Histidine metabolism</keyword>
<keyword id="KW-0378">Hydrolase</keyword>
<keyword id="KW-0408">Iron</keyword>
<keyword id="KW-0479">Metal-binding</keyword>
<keyword id="KW-0862">Zinc</keyword>
<comment type="function">
    <text evidence="1">Catalyzes the hydrolytic cleavage of the carbon-nitrogen bond in imidazolone-5-propanoate to yield N-formimidoyl-L-glutamate. It is the third step in the universal histidine degradation pathway.</text>
</comment>
<comment type="catalytic activity">
    <reaction evidence="1">
        <text>4-imidazolone-5-propanoate + H2O = N-formimidoyl-L-glutamate</text>
        <dbReference type="Rhea" id="RHEA:23660"/>
        <dbReference type="ChEBI" id="CHEBI:15377"/>
        <dbReference type="ChEBI" id="CHEBI:58928"/>
        <dbReference type="ChEBI" id="CHEBI:77893"/>
        <dbReference type="EC" id="3.5.2.7"/>
    </reaction>
</comment>
<comment type="cofactor">
    <cofactor evidence="1">
        <name>Zn(2+)</name>
        <dbReference type="ChEBI" id="CHEBI:29105"/>
    </cofactor>
    <cofactor evidence="1">
        <name>Fe(3+)</name>
        <dbReference type="ChEBI" id="CHEBI:29034"/>
    </cofactor>
    <text evidence="1">Binds 1 zinc or iron ion per subunit.</text>
</comment>
<comment type="pathway">
    <text evidence="1">Amino-acid degradation; L-histidine degradation into L-glutamate; N-formimidoyl-L-glutamate from L-histidine: step 3/3.</text>
</comment>
<comment type="subcellular location">
    <subcellularLocation>
        <location evidence="1">Cytoplasm</location>
    </subcellularLocation>
</comment>
<comment type="similarity">
    <text evidence="1">Belongs to the metallo-dependent hydrolases superfamily. HutI family.</text>
</comment>
<name>HUTI_BACC0</name>
<sequence>MLDTLLINIGQLLTMDQEDGLLRREAMNTLPVIENGAVGIENGVITFVGTAEEAKGLQAKEVIDCGGKMVSPGLVDPHTHLVFGGSRENEIALKLQGVPYLEILEQGGGILSTVNATKQASKEELVQKAKFHLDRMLSFGVTTVEAKSGYGLDDETEWKQLEATAQLQKEHPIDLVSTFLGAHAVPKEYKGRSKEFLQWMLDLLPEMKEKQLAEFVDIFCETGVFSVEESKEFLLKAKELGFDVKIHADEIDPLGGAEAAAEIGAASADHLVGASDKGIEMLANSNTVATLLPGTTFYLNKESFARGRKMIDEGVAVALATDFNPGSCPTENIQLIMSIAMLKLKMTPEEVWNAVTVNSSYAINRGDVAGKIRVGRKADLVLWDAYNYAYVPYHYGVSHVNTVWKNGNIAYTRGEQSWSTATI</sequence>
<feature type="chain" id="PRO_1000121529" description="Imidazolonepropionase">
    <location>
        <begin position="1"/>
        <end position="423"/>
    </location>
</feature>
<feature type="binding site" evidence="1">
    <location>
        <position position="78"/>
    </location>
    <ligand>
        <name>Fe(3+)</name>
        <dbReference type="ChEBI" id="CHEBI:29034"/>
    </ligand>
</feature>
<feature type="binding site" evidence="1">
    <location>
        <position position="78"/>
    </location>
    <ligand>
        <name>Zn(2+)</name>
        <dbReference type="ChEBI" id="CHEBI:29105"/>
    </ligand>
</feature>
<feature type="binding site" evidence="1">
    <location>
        <position position="80"/>
    </location>
    <ligand>
        <name>Fe(3+)</name>
        <dbReference type="ChEBI" id="CHEBI:29034"/>
    </ligand>
</feature>
<feature type="binding site" evidence="1">
    <location>
        <position position="80"/>
    </location>
    <ligand>
        <name>Zn(2+)</name>
        <dbReference type="ChEBI" id="CHEBI:29105"/>
    </ligand>
</feature>
<feature type="binding site" evidence="1">
    <location>
        <position position="87"/>
    </location>
    <ligand>
        <name>4-imidazolone-5-propanoate</name>
        <dbReference type="ChEBI" id="CHEBI:77893"/>
    </ligand>
</feature>
<feature type="binding site" evidence="1">
    <location>
        <position position="150"/>
    </location>
    <ligand>
        <name>4-imidazolone-5-propanoate</name>
        <dbReference type="ChEBI" id="CHEBI:77893"/>
    </ligand>
</feature>
<feature type="binding site" evidence="1">
    <location>
        <position position="150"/>
    </location>
    <ligand>
        <name>N-formimidoyl-L-glutamate</name>
        <dbReference type="ChEBI" id="CHEBI:58928"/>
    </ligand>
</feature>
<feature type="binding site" evidence="1">
    <location>
        <position position="183"/>
    </location>
    <ligand>
        <name>4-imidazolone-5-propanoate</name>
        <dbReference type="ChEBI" id="CHEBI:77893"/>
    </ligand>
</feature>
<feature type="binding site" evidence="1">
    <location>
        <position position="247"/>
    </location>
    <ligand>
        <name>Fe(3+)</name>
        <dbReference type="ChEBI" id="CHEBI:29034"/>
    </ligand>
</feature>
<feature type="binding site" evidence="1">
    <location>
        <position position="247"/>
    </location>
    <ligand>
        <name>Zn(2+)</name>
        <dbReference type="ChEBI" id="CHEBI:29105"/>
    </ligand>
</feature>
<feature type="binding site" evidence="1">
    <location>
        <position position="250"/>
    </location>
    <ligand>
        <name>4-imidazolone-5-propanoate</name>
        <dbReference type="ChEBI" id="CHEBI:77893"/>
    </ligand>
</feature>
<feature type="binding site" evidence="1">
    <location>
        <position position="322"/>
    </location>
    <ligand>
        <name>Fe(3+)</name>
        <dbReference type="ChEBI" id="CHEBI:29034"/>
    </ligand>
</feature>
<feature type="binding site" evidence="1">
    <location>
        <position position="322"/>
    </location>
    <ligand>
        <name>Zn(2+)</name>
        <dbReference type="ChEBI" id="CHEBI:29105"/>
    </ligand>
</feature>
<feature type="binding site" evidence="1">
    <location>
        <position position="324"/>
    </location>
    <ligand>
        <name>N-formimidoyl-L-glutamate</name>
        <dbReference type="ChEBI" id="CHEBI:58928"/>
    </ligand>
</feature>
<feature type="binding site" evidence="1">
    <location>
        <position position="326"/>
    </location>
    <ligand>
        <name>N-formimidoyl-L-glutamate</name>
        <dbReference type="ChEBI" id="CHEBI:58928"/>
    </ligand>
</feature>
<feature type="binding site" evidence="1">
    <location>
        <position position="327"/>
    </location>
    <ligand>
        <name>4-imidazolone-5-propanoate</name>
        <dbReference type="ChEBI" id="CHEBI:77893"/>
    </ligand>
</feature>
<dbReference type="EC" id="3.5.2.7" evidence="1"/>
<dbReference type="EMBL" id="CP001283">
    <property type="protein sequence ID" value="ACK91901.1"/>
    <property type="molecule type" value="Genomic_DNA"/>
</dbReference>
<dbReference type="RefSeq" id="WP_000887529.1">
    <property type="nucleotide sequence ID" value="NC_011773.1"/>
</dbReference>
<dbReference type="SMR" id="B7JI78"/>
<dbReference type="GeneID" id="75086716"/>
<dbReference type="KEGG" id="bcu:BCAH820_3660"/>
<dbReference type="HOGENOM" id="CLU_041647_0_1_9"/>
<dbReference type="UniPathway" id="UPA00379">
    <property type="reaction ID" value="UER00551"/>
</dbReference>
<dbReference type="Proteomes" id="UP000001363">
    <property type="component" value="Chromosome"/>
</dbReference>
<dbReference type="GO" id="GO:0005737">
    <property type="term" value="C:cytoplasm"/>
    <property type="evidence" value="ECO:0007669"/>
    <property type="project" value="UniProtKB-SubCell"/>
</dbReference>
<dbReference type="GO" id="GO:0050480">
    <property type="term" value="F:imidazolonepropionase activity"/>
    <property type="evidence" value="ECO:0007669"/>
    <property type="project" value="UniProtKB-UniRule"/>
</dbReference>
<dbReference type="GO" id="GO:0005506">
    <property type="term" value="F:iron ion binding"/>
    <property type="evidence" value="ECO:0007669"/>
    <property type="project" value="UniProtKB-UniRule"/>
</dbReference>
<dbReference type="GO" id="GO:0008270">
    <property type="term" value="F:zinc ion binding"/>
    <property type="evidence" value="ECO:0007669"/>
    <property type="project" value="UniProtKB-UniRule"/>
</dbReference>
<dbReference type="GO" id="GO:0019556">
    <property type="term" value="P:L-histidine catabolic process to glutamate and formamide"/>
    <property type="evidence" value="ECO:0007669"/>
    <property type="project" value="UniProtKB-UniPathway"/>
</dbReference>
<dbReference type="GO" id="GO:0019557">
    <property type="term" value="P:L-histidine catabolic process to glutamate and formate"/>
    <property type="evidence" value="ECO:0007669"/>
    <property type="project" value="UniProtKB-UniPathway"/>
</dbReference>
<dbReference type="CDD" id="cd01296">
    <property type="entry name" value="Imidazolone-5PH"/>
    <property type="match status" value="1"/>
</dbReference>
<dbReference type="FunFam" id="3.20.20.140:FF:000007">
    <property type="entry name" value="Imidazolonepropionase"/>
    <property type="match status" value="1"/>
</dbReference>
<dbReference type="Gene3D" id="3.20.20.140">
    <property type="entry name" value="Metal-dependent hydrolases"/>
    <property type="match status" value="1"/>
</dbReference>
<dbReference type="Gene3D" id="2.30.40.10">
    <property type="entry name" value="Urease, subunit C, domain 1"/>
    <property type="match status" value="1"/>
</dbReference>
<dbReference type="HAMAP" id="MF_00372">
    <property type="entry name" value="HutI"/>
    <property type="match status" value="1"/>
</dbReference>
<dbReference type="InterPro" id="IPR006680">
    <property type="entry name" value="Amidohydro-rel"/>
</dbReference>
<dbReference type="InterPro" id="IPR005920">
    <property type="entry name" value="HutI"/>
</dbReference>
<dbReference type="InterPro" id="IPR011059">
    <property type="entry name" value="Metal-dep_hydrolase_composite"/>
</dbReference>
<dbReference type="InterPro" id="IPR032466">
    <property type="entry name" value="Metal_Hydrolase"/>
</dbReference>
<dbReference type="NCBIfam" id="TIGR01224">
    <property type="entry name" value="hutI"/>
    <property type="match status" value="1"/>
</dbReference>
<dbReference type="PANTHER" id="PTHR42752">
    <property type="entry name" value="IMIDAZOLONEPROPIONASE"/>
    <property type="match status" value="1"/>
</dbReference>
<dbReference type="PANTHER" id="PTHR42752:SF1">
    <property type="entry name" value="IMIDAZOLONEPROPIONASE-RELATED"/>
    <property type="match status" value="1"/>
</dbReference>
<dbReference type="Pfam" id="PF01979">
    <property type="entry name" value="Amidohydro_1"/>
    <property type="match status" value="1"/>
</dbReference>
<dbReference type="SUPFAM" id="SSF51338">
    <property type="entry name" value="Composite domain of metallo-dependent hydrolases"/>
    <property type="match status" value="1"/>
</dbReference>
<dbReference type="SUPFAM" id="SSF51556">
    <property type="entry name" value="Metallo-dependent hydrolases"/>
    <property type="match status" value="1"/>
</dbReference>
<protein>
    <recommendedName>
        <fullName evidence="1">Imidazolonepropionase</fullName>
        <ecNumber evidence="1">3.5.2.7</ecNumber>
    </recommendedName>
    <alternativeName>
        <fullName evidence="1">Imidazolone-5-propionate hydrolase</fullName>
    </alternativeName>
</protein>
<reference key="1">
    <citation type="submission" date="2008-10" db="EMBL/GenBank/DDBJ databases">
        <title>Genome sequence of Bacillus cereus AH820.</title>
        <authorList>
            <person name="Dodson R.J."/>
            <person name="Durkin A.S."/>
            <person name="Rosovitz M.J."/>
            <person name="Rasko D.A."/>
            <person name="Hoffmaster A."/>
            <person name="Ravel J."/>
            <person name="Sutton G."/>
        </authorList>
    </citation>
    <scope>NUCLEOTIDE SEQUENCE [LARGE SCALE GENOMIC DNA]</scope>
    <source>
        <strain>AH820</strain>
    </source>
</reference>
<evidence type="ECO:0000255" key="1">
    <source>
        <dbReference type="HAMAP-Rule" id="MF_00372"/>
    </source>
</evidence>
<organism>
    <name type="scientific">Bacillus cereus (strain AH820)</name>
    <dbReference type="NCBI Taxonomy" id="405535"/>
    <lineage>
        <taxon>Bacteria</taxon>
        <taxon>Bacillati</taxon>
        <taxon>Bacillota</taxon>
        <taxon>Bacilli</taxon>
        <taxon>Bacillales</taxon>
        <taxon>Bacillaceae</taxon>
        <taxon>Bacillus</taxon>
        <taxon>Bacillus cereus group</taxon>
    </lineage>
</organism>
<proteinExistence type="inferred from homology"/>
<accession>B7JI78</accession>